<comment type="function">
    <text evidence="2 3 4">Involved in translational repression of multiple mRNAs in the distal gonad (PubMed:23264733). Recruited to the 3' untranslated region (UTR) of zif-1 by oma-1 and is required for translational repression of zif-1 (PubMed:20826530). May also be involved in translational repression of mei-1 through recruitment to the mei-1 3' UTR by oma-1 (PubMed:19786575). Required for oogenesis but not spermatogenesis, for P granule formation and for the localization of car-1 and cgh-1 to P granules (PubMed:23264733). Required for normal spindle orientation in early embryos (PubMed:19786575).</text>
</comment>
<comment type="subunit">
    <text evidence="2 4">Interacts with cgh-1 (PubMed:23264733). Interacts with ife-1 and oma-1 (PubMed:19786575).</text>
</comment>
<comment type="interaction">
    <interactant intactId="EBI-2001916">
        <id>Q20898</id>
    </interactant>
    <interactant intactId="EBI-330119">
        <id>O61955</id>
        <label>ife-3</label>
    </interactant>
    <organismsDiffer>false</organismsDiffer>
    <experiments>3</experiments>
</comment>
<comment type="subcellular location">
    <subcellularLocation>
        <location evidence="2 4">Cytoplasm</location>
    </subcellularLocation>
    <text evidence="2 4">In one-cell embryos, expressed highly and diffusely throughout the cytoplasm and is associated with P granules.</text>
</comment>
<comment type="tissue specificity">
    <text evidence="4">In the embryo, significantly enriched in the germ cell lineage.</text>
</comment>
<comment type="developmental stage">
    <text evidence="4">In somatic cells of the embryo, levels are dramatically reduced after the four-cell stage. In 1-day-old adult hermaphrodite gonads, levels are low in the distal gonad, dramatically increase as germ cells enter meiosis and remain high throughout the remainder of the gonad (at protein level).</text>
</comment>
<comment type="disruption phenotype">
    <text evidence="2 3 4">Defective spindle orientation, oogenesis defects and reduced embryo production with ectopic mei-1 localization (PubMed:19786575). Derepression of zif-1 in oocytes (PubMed:20826530). Hermaphrodites are sterile with gonads that are normal in size but display a bulbous shape in the distal region. When grown at 20 degrees Celsius, mutants display a mildly disorganized meiotic progression and contain a mixture of oocytes in diakinesis and pachytene stages in the proximal gonad. When grown at 25 degrees Celsius, 14% of mutants show a bifurcation of the gonad shortly after the transition zone. Strong masculinization of the germline (MOG) phenotype with 48% of mutants containing a mixture of sperm and oocytes in the proximal gonad and 25% containing only sperm. Failure of cgh-1 and car-1 to localize to P granules. Failure of pgh-1 to localize to P granules in 60% of mutants which may be due to the mislocalization of cgh-1 or car-1. Defective P granule formation (PubMed:23264733).</text>
</comment>
<feature type="chain" id="PRO_0000432623" description="Translational repressor ifet-1">
    <location>
        <begin position="1"/>
        <end position="761"/>
    </location>
</feature>
<feature type="region of interest" description="Disordered" evidence="1">
    <location>
        <begin position="101"/>
        <end position="274"/>
    </location>
</feature>
<feature type="region of interest" description="Disordered" evidence="1">
    <location>
        <begin position="386"/>
        <end position="446"/>
    </location>
</feature>
<feature type="region of interest" description="Disordered" evidence="1">
    <location>
        <begin position="557"/>
        <end position="592"/>
    </location>
</feature>
<feature type="region of interest" description="Disordered" evidence="1">
    <location>
        <begin position="681"/>
        <end position="702"/>
    </location>
</feature>
<feature type="region of interest" description="Disordered" evidence="1">
    <location>
        <begin position="730"/>
        <end position="761"/>
    </location>
</feature>
<feature type="compositionally biased region" description="Basic and acidic residues" evidence="1">
    <location>
        <begin position="114"/>
        <end position="128"/>
    </location>
</feature>
<feature type="compositionally biased region" description="Basic and acidic residues" evidence="1">
    <location>
        <begin position="164"/>
        <end position="189"/>
    </location>
</feature>
<feature type="compositionally biased region" description="Basic and acidic residues" evidence="1">
    <location>
        <begin position="212"/>
        <end position="222"/>
    </location>
</feature>
<feature type="compositionally biased region" description="Polar residues" evidence="1">
    <location>
        <begin position="400"/>
        <end position="410"/>
    </location>
</feature>
<feature type="compositionally biased region" description="Polar residues" evidence="1">
    <location>
        <begin position="557"/>
        <end position="568"/>
    </location>
</feature>
<feature type="compositionally biased region" description="Polar residues" evidence="1">
    <location>
        <begin position="576"/>
        <end position="592"/>
    </location>
</feature>
<feature type="compositionally biased region" description="Polar residues" evidence="1">
    <location>
        <begin position="690"/>
        <end position="702"/>
    </location>
</feature>
<reference evidence="8" key="1">
    <citation type="journal article" date="1998" name="Science">
        <title>Genome sequence of the nematode C. elegans: a platform for investigating biology.</title>
        <authorList>
            <consortium name="The C. elegans sequencing consortium"/>
        </authorList>
    </citation>
    <scope>NUCLEOTIDE SEQUENCE [LARGE SCALE GENOMIC DNA]</scope>
    <source>
        <strain evidence="8">Bristol N2</strain>
    </source>
</reference>
<reference evidence="6" key="2">
    <citation type="journal article" date="2009" name="J. Cell Biol.">
        <title>An eIF4E-binding protein regulates katanin protein levels in C. elegans embryos.</title>
        <authorList>
            <person name="Li W."/>
            <person name="DeBella L.R."/>
            <person name="Guven-Ozkan T."/>
            <person name="Lin R."/>
            <person name="Rose L.S."/>
        </authorList>
    </citation>
    <scope>FUNCTION</scope>
    <scope>INTERACTION WITH IFE-1 AND OMA-1</scope>
    <scope>SUBCELLULAR LOCATION</scope>
    <scope>DISRUPTION PHENOTYPE</scope>
</reference>
<reference evidence="6" key="3">
    <citation type="journal article" date="2010" name="Development">
        <title>zif-1 translational repression defines a second, mutually exclusive OMA function in germline transcriptional repression.</title>
        <authorList>
            <person name="Guven-Ozkan T."/>
            <person name="Robertson S.M."/>
            <person name="Nishi Y."/>
            <person name="Lin R."/>
        </authorList>
    </citation>
    <scope>FUNCTION</scope>
    <scope>DISRUPTION PHENOTYPE</scope>
</reference>
<reference evidence="6" key="4">
    <citation type="journal article" date="2013" name="J. Cell Sci.">
        <title>ifet-1 is a broad-scale translational repressor required for normal P granule formation in C. elegans.</title>
        <authorList>
            <person name="Sengupta M.S."/>
            <person name="Low W.Y."/>
            <person name="Patterson J.R."/>
            <person name="Kim H.M."/>
            <person name="Traven A."/>
            <person name="Beilharz T.H."/>
            <person name="Colaiacovo M.P."/>
            <person name="Schisa J.A."/>
            <person name="Boag P.R."/>
        </authorList>
    </citation>
    <scope>FUNCTION</scope>
    <scope>INTERACTION WITH CGH-1</scope>
    <scope>SUBCELLULAR LOCATION</scope>
    <scope>TISSUE SPECIFICITY</scope>
    <scope>DEVELOPMENTAL STAGE</scope>
    <scope>DISRUPTION PHENOTYPE</scope>
</reference>
<proteinExistence type="evidence at protein level"/>
<gene>
    <name evidence="9" type="primary">ifet-1</name>
    <name evidence="5" type="synonym">spn-2</name>
    <name evidence="9" type="ORF">F56F3.1</name>
</gene>
<sequence length="761" mass="83951">MTSHLDDEGLHPMVSTLLGGGTLPTVPFKAYTRERMMELRTTKASMTRPENLSEDFNGEDGKFSPLKWLEHRWEIEGIKNRPMSKKIDSLCAGADENTGLSPQRRAFSSGCKAPTDDKGRDGEYERLGGHGKNWRNGSTGGADKFASRGNDFKPSFQKGNQLERGTRGAEWKKDTTRGAKFAPRREERLTSLSGSEKLPEWADGPTTMDDMIELRGFDEPKKVKNKKNPKEKKEKEAVKAPEPVECVGSRPSSTGLKTSEPIDDPAIAYSSSGGGALPATDQELAALLGCLDIQKTSRKIDGDDMAWAHKSEETAGGTSRLSRFFAKKNKSPELDAMLSSVGGGNDENVANPMLARLFGHSGGDNNASSSGAGDIKGGMRLEDLEKGMESKEPSKVSPLQDPSQQAQLLQHLQKFAKQQAESGQHIHHHRQPTPPNGGPQHQQHLHHPMVHPGMQIIADPSLLASFAQNPVILNAYVENQLQEAVNAAIRANNGQQLPPQLHEQLRMASMRNKAFLQSQTLTFVSLQQQHQNIQQHQQQQQHHQHKGRTPAMIPASVQRQLQKSSSNADQKKEKTSQSPPESNQETSDAHNQSDAMNQLKKLHMQQNYANMVQAMNSGVGWARGNGVVNGQQQHPQQQLPPNVQMLMAQHQQAQMQHLKMMMSRAQQQHMLMAKIAQMQQQQAQMANMQERQGPSHNQQQHQPVVPSELSQVGPIQTPLEKLLASVGVQGSQFTGSGDRIPSSVRPMSLEDLEKQLTAVPK</sequence>
<organism evidence="8">
    <name type="scientific">Caenorhabditis elegans</name>
    <dbReference type="NCBI Taxonomy" id="6239"/>
    <lineage>
        <taxon>Eukaryota</taxon>
        <taxon>Metazoa</taxon>
        <taxon>Ecdysozoa</taxon>
        <taxon>Nematoda</taxon>
        <taxon>Chromadorea</taxon>
        <taxon>Rhabditida</taxon>
        <taxon>Rhabditina</taxon>
        <taxon>Rhabditomorpha</taxon>
        <taxon>Rhabditoidea</taxon>
        <taxon>Rhabditidae</taxon>
        <taxon>Peloderinae</taxon>
        <taxon>Caenorhabditis</taxon>
    </lineage>
</organism>
<evidence type="ECO:0000256" key="1">
    <source>
        <dbReference type="SAM" id="MobiDB-lite"/>
    </source>
</evidence>
<evidence type="ECO:0000269" key="2">
    <source>
    </source>
</evidence>
<evidence type="ECO:0000269" key="3">
    <source>
    </source>
</evidence>
<evidence type="ECO:0000269" key="4">
    <source>
    </source>
</evidence>
<evidence type="ECO:0000303" key="5">
    <source>
    </source>
</evidence>
<evidence type="ECO:0000305" key="6"/>
<evidence type="ECO:0000305" key="7">
    <source>
    </source>
</evidence>
<evidence type="ECO:0000312" key="8">
    <source>
        <dbReference type="Proteomes" id="UP000001940"/>
    </source>
</evidence>
<evidence type="ECO:0000312" key="9">
    <source>
        <dbReference type="WormBase" id="F56F3.1"/>
    </source>
</evidence>
<accession>Q20898</accession>
<keyword id="KW-0963">Cytoplasm</keyword>
<keyword id="KW-1185">Reference proteome</keyword>
<keyword id="KW-0678">Repressor</keyword>
<keyword id="KW-0810">Translation regulation</keyword>
<dbReference type="EMBL" id="Z32681">
    <property type="protein sequence ID" value="CAA83608.1"/>
    <property type="molecule type" value="Genomic_DNA"/>
</dbReference>
<dbReference type="PIR" id="H88429">
    <property type="entry name" value="H88429"/>
</dbReference>
<dbReference type="PIR" id="S43585">
    <property type="entry name" value="S43585"/>
</dbReference>
<dbReference type="RefSeq" id="NP_001369844.1">
    <property type="nucleotide sequence ID" value="NM_001384075.2"/>
</dbReference>
<dbReference type="RefSeq" id="NP_497909.1">
    <property type="nucleotide sequence ID" value="NM_065508.5"/>
</dbReference>
<dbReference type="FunCoup" id="Q20898">
    <property type="interactions" value="418"/>
</dbReference>
<dbReference type="IntAct" id="Q20898">
    <property type="interactions" value="1"/>
</dbReference>
<dbReference type="STRING" id="6239.F56F3.1.1"/>
<dbReference type="PaxDb" id="6239-F56F3.1"/>
<dbReference type="PeptideAtlas" id="Q20898"/>
<dbReference type="EnsemblMetazoa" id="F56F3.1.1">
    <property type="protein sequence ID" value="F56F3.1.1"/>
    <property type="gene ID" value="WBGene00004132"/>
</dbReference>
<dbReference type="GeneID" id="175583"/>
<dbReference type="UCSC" id="F56F3.1">
    <property type="organism name" value="c. elegans"/>
</dbReference>
<dbReference type="AGR" id="WB:WBGene00004132"/>
<dbReference type="WormBase" id="F56F3.1">
    <property type="protein sequence ID" value="CE17911"/>
    <property type="gene ID" value="WBGene00004132"/>
    <property type="gene designation" value="ifet-1"/>
</dbReference>
<dbReference type="eggNOG" id="ENOG502QRQE">
    <property type="taxonomic scope" value="Eukaryota"/>
</dbReference>
<dbReference type="GeneTree" id="ENSGT00940000174874"/>
<dbReference type="HOGENOM" id="CLU_021180_0_0_1"/>
<dbReference type="InParanoid" id="Q20898"/>
<dbReference type="OMA" id="PPTANCI"/>
<dbReference type="OrthoDB" id="8916892at2759"/>
<dbReference type="PRO" id="PR:Q20898"/>
<dbReference type="Proteomes" id="UP000001940">
    <property type="component" value="Chromosome III"/>
</dbReference>
<dbReference type="Bgee" id="WBGene00004132">
    <property type="expression patterns" value="Expressed in embryo and 4 other cell types or tissues"/>
</dbReference>
<dbReference type="GO" id="GO:0005737">
    <property type="term" value="C:cytoplasm"/>
    <property type="evidence" value="ECO:0000318"/>
    <property type="project" value="GO_Central"/>
</dbReference>
<dbReference type="GO" id="GO:0005634">
    <property type="term" value="C:nucleus"/>
    <property type="evidence" value="ECO:0000318"/>
    <property type="project" value="GO_Central"/>
</dbReference>
<dbReference type="GO" id="GO:0043186">
    <property type="term" value="C:P granule"/>
    <property type="evidence" value="ECO:0000314"/>
    <property type="project" value="WormBase"/>
</dbReference>
<dbReference type="GO" id="GO:0035770">
    <property type="term" value="C:ribonucleoprotein granule"/>
    <property type="evidence" value="ECO:0000314"/>
    <property type="project" value="WormBase"/>
</dbReference>
<dbReference type="GO" id="GO:0003729">
    <property type="term" value="F:mRNA binding"/>
    <property type="evidence" value="ECO:0000318"/>
    <property type="project" value="GO_Central"/>
</dbReference>
<dbReference type="GO" id="GO:0017148">
    <property type="term" value="P:negative regulation of translation"/>
    <property type="evidence" value="ECO:0000315"/>
    <property type="project" value="WormBase"/>
</dbReference>
<dbReference type="InterPro" id="IPR018862">
    <property type="entry name" value="eIF4E-T"/>
</dbReference>
<dbReference type="PANTHER" id="PTHR12269">
    <property type="entry name" value="EUKARYOTIC TRANSLATION INITIATION FACTOR 4E TRANSPORTER"/>
    <property type="match status" value="1"/>
</dbReference>
<dbReference type="PANTHER" id="PTHR12269:SF1">
    <property type="entry name" value="EUKARYOTIC TRANSLATION INITIATION FACTOR 4E TRANSPORTER"/>
    <property type="match status" value="1"/>
</dbReference>
<name>IFET1_CAEEL</name>
<protein>
    <recommendedName>
        <fullName evidence="7">Translational repressor ifet-1</fullName>
    </recommendedName>
    <alternativeName>
        <fullName evidence="5">Spindle orientation defective protein 2</fullName>
    </alternativeName>
</protein>